<comment type="function">
    <text evidence="1">Catalyzes the formation of 6,7-dimethyl-8-ribityllumazine by condensation of 5-amino-6-(D-ribitylamino)uracil with 3,4-dihydroxy-2-butanone 4-phosphate. This is the penultimate step in the biosynthesis of riboflavin.</text>
</comment>
<comment type="catalytic activity">
    <reaction evidence="1">
        <text>(2S)-2-hydroxy-3-oxobutyl phosphate + 5-amino-6-(D-ribitylamino)uracil = 6,7-dimethyl-8-(1-D-ribityl)lumazine + phosphate + 2 H2O + H(+)</text>
        <dbReference type="Rhea" id="RHEA:26152"/>
        <dbReference type="ChEBI" id="CHEBI:15377"/>
        <dbReference type="ChEBI" id="CHEBI:15378"/>
        <dbReference type="ChEBI" id="CHEBI:15934"/>
        <dbReference type="ChEBI" id="CHEBI:43474"/>
        <dbReference type="ChEBI" id="CHEBI:58201"/>
        <dbReference type="ChEBI" id="CHEBI:58830"/>
        <dbReference type="EC" id="2.5.1.78"/>
    </reaction>
</comment>
<comment type="pathway">
    <text evidence="1">Cofactor biosynthesis; riboflavin biosynthesis; riboflavin from 2-hydroxy-3-oxobutyl phosphate and 5-amino-6-(D-ribitylamino)uracil: step 1/2.</text>
</comment>
<comment type="similarity">
    <text evidence="1">Belongs to the DMRL synthase family.</text>
</comment>
<dbReference type="EC" id="2.5.1.78" evidence="1"/>
<dbReference type="EMBL" id="CP000458">
    <property type="protein sequence ID" value="ABK07709.1"/>
    <property type="molecule type" value="Genomic_DNA"/>
</dbReference>
<dbReference type="RefSeq" id="WP_006476661.1">
    <property type="nucleotide sequence ID" value="NC_008542.1"/>
</dbReference>
<dbReference type="SMR" id="A0K5D2"/>
<dbReference type="GeneID" id="83047708"/>
<dbReference type="KEGG" id="bch:Bcen2424_0956"/>
<dbReference type="HOGENOM" id="CLU_089358_1_2_4"/>
<dbReference type="UniPathway" id="UPA00275">
    <property type="reaction ID" value="UER00404"/>
</dbReference>
<dbReference type="GO" id="GO:0005829">
    <property type="term" value="C:cytosol"/>
    <property type="evidence" value="ECO:0007669"/>
    <property type="project" value="TreeGrafter"/>
</dbReference>
<dbReference type="GO" id="GO:0009349">
    <property type="term" value="C:riboflavin synthase complex"/>
    <property type="evidence" value="ECO:0007669"/>
    <property type="project" value="InterPro"/>
</dbReference>
<dbReference type="GO" id="GO:0000906">
    <property type="term" value="F:6,7-dimethyl-8-ribityllumazine synthase activity"/>
    <property type="evidence" value="ECO:0007669"/>
    <property type="project" value="UniProtKB-UniRule"/>
</dbReference>
<dbReference type="GO" id="GO:0009231">
    <property type="term" value="P:riboflavin biosynthetic process"/>
    <property type="evidence" value="ECO:0007669"/>
    <property type="project" value="UniProtKB-UniRule"/>
</dbReference>
<dbReference type="CDD" id="cd09209">
    <property type="entry name" value="Lumazine_synthase-I"/>
    <property type="match status" value="1"/>
</dbReference>
<dbReference type="Gene3D" id="3.40.50.960">
    <property type="entry name" value="Lumazine/riboflavin synthase"/>
    <property type="match status" value="1"/>
</dbReference>
<dbReference type="HAMAP" id="MF_00178">
    <property type="entry name" value="Lumazine_synth"/>
    <property type="match status" value="1"/>
</dbReference>
<dbReference type="InterPro" id="IPR034964">
    <property type="entry name" value="LS"/>
</dbReference>
<dbReference type="InterPro" id="IPR002180">
    <property type="entry name" value="LS/RS"/>
</dbReference>
<dbReference type="InterPro" id="IPR036467">
    <property type="entry name" value="LS/RS_sf"/>
</dbReference>
<dbReference type="NCBIfam" id="TIGR00114">
    <property type="entry name" value="lumazine-synth"/>
    <property type="match status" value="1"/>
</dbReference>
<dbReference type="PANTHER" id="PTHR21058:SF0">
    <property type="entry name" value="6,7-DIMETHYL-8-RIBITYLLUMAZINE SYNTHASE"/>
    <property type="match status" value="1"/>
</dbReference>
<dbReference type="PANTHER" id="PTHR21058">
    <property type="entry name" value="6,7-DIMETHYL-8-RIBITYLLUMAZINE SYNTHASE DMRL SYNTHASE LUMAZINE SYNTHASE"/>
    <property type="match status" value="1"/>
</dbReference>
<dbReference type="Pfam" id="PF00885">
    <property type="entry name" value="DMRL_synthase"/>
    <property type="match status" value="1"/>
</dbReference>
<dbReference type="SUPFAM" id="SSF52121">
    <property type="entry name" value="Lumazine synthase"/>
    <property type="match status" value="1"/>
</dbReference>
<sequence length="171" mass="18445">MEIGQYQPNLEGDGLRIGIVQSRFNEPVCNGLADACVEELERLGVTGEDVLLVSVPGALEIPLALQKLAESGQFDALIALGAVIRGETYHFELVSNESGAGITRIGLDFNLPIANAVLTTENDEQAVARMTEKGRDAARVAVEMANLTMALDQLGDDEDEEEDEDDEEERA</sequence>
<protein>
    <recommendedName>
        <fullName evidence="1">6,7-dimethyl-8-ribityllumazine synthase</fullName>
        <shortName evidence="1">DMRL synthase</shortName>
        <shortName evidence="1">LS</shortName>
        <shortName evidence="1">Lumazine synthase</shortName>
        <ecNumber evidence="1">2.5.1.78</ecNumber>
    </recommendedName>
</protein>
<evidence type="ECO:0000255" key="1">
    <source>
        <dbReference type="HAMAP-Rule" id="MF_00178"/>
    </source>
</evidence>
<evidence type="ECO:0000256" key="2">
    <source>
        <dbReference type="SAM" id="MobiDB-lite"/>
    </source>
</evidence>
<feature type="chain" id="PRO_1000040377" description="6,7-dimethyl-8-ribityllumazine synthase">
    <location>
        <begin position="1"/>
        <end position="171"/>
    </location>
</feature>
<feature type="region of interest" description="Disordered" evidence="2">
    <location>
        <begin position="150"/>
        <end position="171"/>
    </location>
</feature>
<feature type="compositionally biased region" description="Acidic residues" evidence="2">
    <location>
        <begin position="154"/>
        <end position="171"/>
    </location>
</feature>
<feature type="active site" description="Proton donor" evidence="1">
    <location>
        <position position="90"/>
    </location>
</feature>
<feature type="binding site" evidence="1">
    <location>
        <position position="24"/>
    </location>
    <ligand>
        <name>5-amino-6-(D-ribitylamino)uracil</name>
        <dbReference type="ChEBI" id="CHEBI:15934"/>
    </ligand>
</feature>
<feature type="binding site" evidence="1">
    <location>
        <begin position="58"/>
        <end position="60"/>
    </location>
    <ligand>
        <name>5-amino-6-(D-ribitylamino)uracil</name>
        <dbReference type="ChEBI" id="CHEBI:15934"/>
    </ligand>
</feature>
<feature type="binding site" evidence="1">
    <location>
        <begin position="82"/>
        <end position="84"/>
    </location>
    <ligand>
        <name>5-amino-6-(D-ribitylamino)uracil</name>
        <dbReference type="ChEBI" id="CHEBI:15934"/>
    </ligand>
</feature>
<feature type="binding site" evidence="1">
    <location>
        <begin position="87"/>
        <end position="88"/>
    </location>
    <ligand>
        <name>(2S)-2-hydroxy-3-oxobutyl phosphate</name>
        <dbReference type="ChEBI" id="CHEBI:58830"/>
    </ligand>
</feature>
<feature type="binding site" evidence="1">
    <location>
        <position position="115"/>
    </location>
    <ligand>
        <name>5-amino-6-(D-ribitylamino)uracil</name>
        <dbReference type="ChEBI" id="CHEBI:15934"/>
    </ligand>
</feature>
<feature type="binding site" evidence="1">
    <location>
        <position position="129"/>
    </location>
    <ligand>
        <name>(2S)-2-hydroxy-3-oxobutyl phosphate</name>
        <dbReference type="ChEBI" id="CHEBI:58830"/>
    </ligand>
</feature>
<gene>
    <name evidence="1" type="primary">ribH</name>
    <name type="ordered locus">Bcen2424_0956</name>
</gene>
<organism>
    <name type="scientific">Burkholderia cenocepacia (strain HI2424)</name>
    <dbReference type="NCBI Taxonomy" id="331272"/>
    <lineage>
        <taxon>Bacteria</taxon>
        <taxon>Pseudomonadati</taxon>
        <taxon>Pseudomonadota</taxon>
        <taxon>Betaproteobacteria</taxon>
        <taxon>Burkholderiales</taxon>
        <taxon>Burkholderiaceae</taxon>
        <taxon>Burkholderia</taxon>
        <taxon>Burkholderia cepacia complex</taxon>
    </lineage>
</organism>
<accession>A0K5D2</accession>
<name>RISB_BURCH</name>
<proteinExistence type="inferred from homology"/>
<keyword id="KW-0686">Riboflavin biosynthesis</keyword>
<keyword id="KW-0808">Transferase</keyword>
<reference key="1">
    <citation type="submission" date="2006-08" db="EMBL/GenBank/DDBJ databases">
        <title>Complete sequence of chromosome 1 of Burkholderia cenocepacia HI2424.</title>
        <authorList>
            <person name="Copeland A."/>
            <person name="Lucas S."/>
            <person name="Lapidus A."/>
            <person name="Barry K."/>
            <person name="Detter J.C."/>
            <person name="Glavina del Rio T."/>
            <person name="Hammon N."/>
            <person name="Israni S."/>
            <person name="Pitluck S."/>
            <person name="Chain P."/>
            <person name="Malfatti S."/>
            <person name="Shin M."/>
            <person name="Vergez L."/>
            <person name="Schmutz J."/>
            <person name="Larimer F."/>
            <person name="Land M."/>
            <person name="Hauser L."/>
            <person name="Kyrpides N."/>
            <person name="Kim E."/>
            <person name="LiPuma J.J."/>
            <person name="Gonzalez C.F."/>
            <person name="Konstantinidis K."/>
            <person name="Tiedje J.M."/>
            <person name="Richardson P."/>
        </authorList>
    </citation>
    <scope>NUCLEOTIDE SEQUENCE [LARGE SCALE GENOMIC DNA]</scope>
    <source>
        <strain>HI2424</strain>
    </source>
</reference>